<organism>
    <name type="scientific">Bacillus thuringiensis subsp. konkukian (strain 97-27)</name>
    <dbReference type="NCBI Taxonomy" id="281309"/>
    <lineage>
        <taxon>Bacteria</taxon>
        <taxon>Bacillati</taxon>
        <taxon>Bacillota</taxon>
        <taxon>Bacilli</taxon>
        <taxon>Bacillales</taxon>
        <taxon>Bacillaceae</taxon>
        <taxon>Bacillus</taxon>
        <taxon>Bacillus cereus group</taxon>
    </lineage>
</organism>
<keyword id="KW-0963">Cytoplasm</keyword>
<keyword id="KW-0251">Elongation factor</keyword>
<keyword id="KW-0648">Protein biosynthesis</keyword>
<gene>
    <name evidence="1" type="primary">tsf</name>
    <name type="ordered locus">BT9727_3567</name>
</gene>
<comment type="function">
    <text evidence="1">Associates with the EF-Tu.GDP complex and induces the exchange of GDP to GTP. It remains bound to the aminoacyl-tRNA.EF-Tu.GTP complex up to the GTP hydrolysis stage on the ribosome.</text>
</comment>
<comment type="subcellular location">
    <subcellularLocation>
        <location evidence="1">Cytoplasm</location>
    </subcellularLocation>
</comment>
<comment type="similarity">
    <text evidence="1">Belongs to the EF-Ts family.</text>
</comment>
<feature type="chain" id="PRO_0000161074" description="Elongation factor Ts">
    <location>
        <begin position="1"/>
        <end position="295"/>
    </location>
</feature>
<feature type="region of interest" description="Involved in Mg(2+) ion dislocation from EF-Tu" evidence="1">
    <location>
        <begin position="79"/>
        <end position="82"/>
    </location>
</feature>
<proteinExistence type="inferred from homology"/>
<name>EFTS_BACHK</name>
<accession>Q6HEY9</accession>
<evidence type="ECO:0000255" key="1">
    <source>
        <dbReference type="HAMAP-Rule" id="MF_00050"/>
    </source>
</evidence>
<protein>
    <recommendedName>
        <fullName evidence="1">Elongation factor Ts</fullName>
        <shortName evidence="1">EF-Ts</shortName>
    </recommendedName>
</protein>
<sequence length="295" mass="32435">MAITAQMVKELREKTGAGMMDCKKALTETNGDMEKAIDFLREKGIAKAAKKADRIAAEGLTFIETNGNDGLILELNSETDFVAKNEGFQTLIKELAAHLLANKPANVEEAMAQTMENGKKVEEHINEAIAKIGEKLTLRRFEIVSKTDADAFGAYLHMGGRIGVLTVLEGSTDEAAAKDVAMHIAAVNPKYIDRDAVTAEEVEHERQVLTQQALNEGKPEKIVAKMVEGRLGKFFEEICLLDQAFVKNPDMKVRQFVESKGGTLKGFVRYAVGEGIEKREDNFAEEVMNQVKGSN</sequence>
<reference key="1">
    <citation type="journal article" date="2006" name="J. Bacteriol.">
        <title>Pathogenomic sequence analysis of Bacillus cereus and Bacillus thuringiensis isolates closely related to Bacillus anthracis.</title>
        <authorList>
            <person name="Han C.S."/>
            <person name="Xie G."/>
            <person name="Challacombe J.F."/>
            <person name="Altherr M.R."/>
            <person name="Bhotika S.S."/>
            <person name="Bruce D."/>
            <person name="Campbell C.S."/>
            <person name="Campbell M.L."/>
            <person name="Chen J."/>
            <person name="Chertkov O."/>
            <person name="Cleland C."/>
            <person name="Dimitrijevic M."/>
            <person name="Doggett N.A."/>
            <person name="Fawcett J.J."/>
            <person name="Glavina T."/>
            <person name="Goodwin L.A."/>
            <person name="Hill K.K."/>
            <person name="Hitchcock P."/>
            <person name="Jackson P.J."/>
            <person name="Keim P."/>
            <person name="Kewalramani A.R."/>
            <person name="Longmire J."/>
            <person name="Lucas S."/>
            <person name="Malfatti S."/>
            <person name="McMurry K."/>
            <person name="Meincke L.J."/>
            <person name="Misra M."/>
            <person name="Moseman B.L."/>
            <person name="Mundt M."/>
            <person name="Munk A.C."/>
            <person name="Okinaka R.T."/>
            <person name="Parson-Quintana B."/>
            <person name="Reilly L.P."/>
            <person name="Richardson P."/>
            <person name="Robinson D.L."/>
            <person name="Rubin E."/>
            <person name="Saunders E."/>
            <person name="Tapia R."/>
            <person name="Tesmer J.G."/>
            <person name="Thayer N."/>
            <person name="Thompson L.S."/>
            <person name="Tice H."/>
            <person name="Ticknor L.O."/>
            <person name="Wills P.L."/>
            <person name="Brettin T.S."/>
            <person name="Gilna P."/>
        </authorList>
    </citation>
    <scope>NUCLEOTIDE SEQUENCE [LARGE SCALE GENOMIC DNA]</scope>
    <source>
        <strain>97-27</strain>
    </source>
</reference>
<dbReference type="EMBL" id="AE017355">
    <property type="protein sequence ID" value="AAT60600.1"/>
    <property type="molecule type" value="Genomic_DNA"/>
</dbReference>
<dbReference type="RefSeq" id="WP_001018581.1">
    <property type="nucleotide sequence ID" value="NC_005957.1"/>
</dbReference>
<dbReference type="RefSeq" id="YP_037887.1">
    <property type="nucleotide sequence ID" value="NC_005957.1"/>
</dbReference>
<dbReference type="SMR" id="Q6HEY9"/>
<dbReference type="GeneID" id="45023654"/>
<dbReference type="KEGG" id="btk:BT9727_3567"/>
<dbReference type="PATRIC" id="fig|281309.8.peg.3805"/>
<dbReference type="HOGENOM" id="CLU_047155_0_2_9"/>
<dbReference type="Proteomes" id="UP000001301">
    <property type="component" value="Chromosome"/>
</dbReference>
<dbReference type="GO" id="GO:0005737">
    <property type="term" value="C:cytoplasm"/>
    <property type="evidence" value="ECO:0007669"/>
    <property type="project" value="UniProtKB-SubCell"/>
</dbReference>
<dbReference type="GO" id="GO:0003746">
    <property type="term" value="F:translation elongation factor activity"/>
    <property type="evidence" value="ECO:0007669"/>
    <property type="project" value="UniProtKB-UniRule"/>
</dbReference>
<dbReference type="CDD" id="cd14275">
    <property type="entry name" value="UBA_EF-Ts"/>
    <property type="match status" value="1"/>
</dbReference>
<dbReference type="FunFam" id="1.10.286.20:FF:000003">
    <property type="entry name" value="Elongation factor Ts"/>
    <property type="match status" value="1"/>
</dbReference>
<dbReference type="FunFam" id="1.10.8.10:FF:000001">
    <property type="entry name" value="Elongation factor Ts"/>
    <property type="match status" value="1"/>
</dbReference>
<dbReference type="FunFam" id="3.30.479.20:FF:000005">
    <property type="entry name" value="Elongation factor Ts"/>
    <property type="match status" value="1"/>
</dbReference>
<dbReference type="Gene3D" id="1.10.286.20">
    <property type="match status" value="1"/>
</dbReference>
<dbReference type="Gene3D" id="1.10.8.10">
    <property type="entry name" value="DNA helicase RuvA subunit, C-terminal domain"/>
    <property type="match status" value="1"/>
</dbReference>
<dbReference type="Gene3D" id="3.30.479.20">
    <property type="entry name" value="Elongation factor Ts, dimerisation domain"/>
    <property type="match status" value="2"/>
</dbReference>
<dbReference type="HAMAP" id="MF_00050">
    <property type="entry name" value="EF_Ts"/>
    <property type="match status" value="1"/>
</dbReference>
<dbReference type="InterPro" id="IPR036402">
    <property type="entry name" value="EF-Ts_dimer_sf"/>
</dbReference>
<dbReference type="InterPro" id="IPR001816">
    <property type="entry name" value="Transl_elong_EFTs/EF1B"/>
</dbReference>
<dbReference type="InterPro" id="IPR014039">
    <property type="entry name" value="Transl_elong_EFTs/EF1B_dimer"/>
</dbReference>
<dbReference type="InterPro" id="IPR018101">
    <property type="entry name" value="Transl_elong_Ts_CS"/>
</dbReference>
<dbReference type="InterPro" id="IPR009060">
    <property type="entry name" value="UBA-like_sf"/>
</dbReference>
<dbReference type="NCBIfam" id="TIGR00116">
    <property type="entry name" value="tsf"/>
    <property type="match status" value="1"/>
</dbReference>
<dbReference type="PANTHER" id="PTHR11741">
    <property type="entry name" value="ELONGATION FACTOR TS"/>
    <property type="match status" value="1"/>
</dbReference>
<dbReference type="PANTHER" id="PTHR11741:SF0">
    <property type="entry name" value="ELONGATION FACTOR TS, MITOCHONDRIAL"/>
    <property type="match status" value="1"/>
</dbReference>
<dbReference type="Pfam" id="PF00889">
    <property type="entry name" value="EF_TS"/>
    <property type="match status" value="1"/>
</dbReference>
<dbReference type="SUPFAM" id="SSF54713">
    <property type="entry name" value="Elongation factor Ts (EF-Ts), dimerisation domain"/>
    <property type="match status" value="2"/>
</dbReference>
<dbReference type="SUPFAM" id="SSF46934">
    <property type="entry name" value="UBA-like"/>
    <property type="match status" value="1"/>
</dbReference>
<dbReference type="PROSITE" id="PS01126">
    <property type="entry name" value="EF_TS_1"/>
    <property type="match status" value="1"/>
</dbReference>
<dbReference type="PROSITE" id="PS01127">
    <property type="entry name" value="EF_TS_2"/>
    <property type="match status" value="1"/>
</dbReference>